<feature type="chain" id="PRO_0000190205" description="Regulating synaptic membrane exocytosis protein 3">
    <location>
        <begin position="1"/>
        <end position="307"/>
    </location>
</feature>
<feature type="domain" description="C2" evidence="2">
    <location>
        <begin position="155"/>
        <end position="273"/>
    </location>
</feature>
<feature type="region of interest" description="Disordered" evidence="3">
    <location>
        <begin position="86"/>
        <end position="120"/>
    </location>
</feature>
<feature type="compositionally biased region" description="Polar residues" evidence="3">
    <location>
        <begin position="109"/>
        <end position="119"/>
    </location>
</feature>
<feature type="modified residue" description="Phosphoserine" evidence="4">
    <location>
        <position position="294"/>
    </location>
</feature>
<feature type="modified residue" description="Phosphoserine" evidence="4">
    <location>
        <position position="297"/>
    </location>
</feature>
<reference key="1">
    <citation type="journal article" date="2003" name="Genomics">
        <title>Genomic definition of RIM proteins: evolutionary amplification of a family of synaptic regulatory proteins.</title>
        <authorList>
            <person name="Wang Y."/>
            <person name="Suedhof T.C."/>
        </authorList>
    </citation>
    <scope>NUCLEOTIDE SEQUENCE [MRNA]</scope>
</reference>
<reference key="2">
    <citation type="journal article" date="2003" name="DNA Res.">
        <title>Prediction of the coding sequences of mouse homologues of KIAA gene: II. The complete nucleotide sequences of 400 mouse KIAA-homologous cDNAs identified by screening of terminal sequences of cDNA clones randomly sampled from size-fractionated libraries.</title>
        <authorList>
            <person name="Okazaki N."/>
            <person name="Kikuno R."/>
            <person name="Ohara R."/>
            <person name="Inamoto S."/>
            <person name="Aizawa H."/>
            <person name="Yuasa S."/>
            <person name="Nakajima D."/>
            <person name="Nagase T."/>
            <person name="Ohara O."/>
            <person name="Koga H."/>
        </authorList>
    </citation>
    <scope>NUCLEOTIDE SEQUENCE [LARGE SCALE MRNA] OF 45-307</scope>
    <source>
        <tissue>Brain</tissue>
    </source>
</reference>
<reference key="3">
    <citation type="submission" date="2003-12" db="EMBL/GenBank/DDBJ databases">
        <authorList>
            <person name="Okazaki N."/>
            <person name="Kikuno R."/>
            <person name="Nagase T."/>
            <person name="Ohara O."/>
            <person name="Koga H."/>
        </authorList>
    </citation>
    <scope>SEQUENCE REVISION</scope>
</reference>
<reference key="4">
    <citation type="journal article" date="2010" name="Cell">
        <title>A tissue-specific atlas of mouse protein phosphorylation and expression.</title>
        <authorList>
            <person name="Huttlin E.L."/>
            <person name="Jedrychowski M.P."/>
            <person name="Elias J.E."/>
            <person name="Goswami T."/>
            <person name="Rad R."/>
            <person name="Beausoleil S.A."/>
            <person name="Villen J."/>
            <person name="Haas W."/>
            <person name="Sowa M.E."/>
            <person name="Gygi S.P."/>
        </authorList>
    </citation>
    <scope>PHOSPHORYLATION [LARGE SCALE ANALYSIS] AT SER-294 AND SER-297</scope>
    <scope>IDENTIFICATION BY MASS SPECTROMETRY [LARGE SCALE ANALYSIS]</scope>
    <source>
        <tissue>Brain</tissue>
        <tissue>Spleen</tissue>
        <tissue>Testis</tissue>
    </source>
</reference>
<accession>Q80U57</accession>
<sequence>MFNGEPGPASAGASRNVVRSSSISGEICGSQQAGGGAGTTTAKKRRSSLGAKMVAIVGLTQWSKSTLQLPQPEGATKKLRSNIRRSTETGIAVEMRSRVTRQGSRESTDGSTNSNSSEGTFIFPTRLGAESQFSDFLDGLGPAQIVGRQTLATPPMGDVHIAIMDRSGQLEVEVIEARGLTPKPGSKSLPATYIKAYLLENGACVAKKKTKVAKKTCDPLYQQALLFDEGPQGKVLQVIVWGDYGRMDHKCFMGMAQIMLDELDLSAAVTGWYKLFPTSSVADSTLGSLTRRLSQSSLESATSPSCS</sequence>
<name>RIMS3_MOUSE</name>
<organism>
    <name type="scientific">Mus musculus</name>
    <name type="common">Mouse</name>
    <dbReference type="NCBI Taxonomy" id="10090"/>
    <lineage>
        <taxon>Eukaryota</taxon>
        <taxon>Metazoa</taxon>
        <taxon>Chordata</taxon>
        <taxon>Craniata</taxon>
        <taxon>Vertebrata</taxon>
        <taxon>Euteleostomi</taxon>
        <taxon>Mammalia</taxon>
        <taxon>Eutheria</taxon>
        <taxon>Euarchontoglires</taxon>
        <taxon>Glires</taxon>
        <taxon>Rodentia</taxon>
        <taxon>Myomorpha</taxon>
        <taxon>Muroidea</taxon>
        <taxon>Muridae</taxon>
        <taxon>Murinae</taxon>
        <taxon>Mus</taxon>
        <taxon>Mus</taxon>
    </lineage>
</organism>
<evidence type="ECO:0000250" key="1"/>
<evidence type="ECO:0000255" key="2">
    <source>
        <dbReference type="PROSITE-ProRule" id="PRU00041"/>
    </source>
</evidence>
<evidence type="ECO:0000256" key="3">
    <source>
        <dbReference type="SAM" id="MobiDB-lite"/>
    </source>
</evidence>
<evidence type="ECO:0007744" key="4">
    <source>
    </source>
</evidence>
<dbReference type="EMBL" id="AY326953">
    <property type="protein sequence ID" value="AAQ01680.1"/>
    <property type="molecule type" value="mRNA"/>
</dbReference>
<dbReference type="EMBL" id="AK122226">
    <property type="protein sequence ID" value="BAC65508.2"/>
    <property type="molecule type" value="mRNA"/>
</dbReference>
<dbReference type="CCDS" id="CCDS18595.1"/>
<dbReference type="RefSeq" id="NP_001417031.1">
    <property type="nucleotide sequence ID" value="NM_001430102.1"/>
</dbReference>
<dbReference type="RefSeq" id="NP_891559.1">
    <property type="nucleotide sequence ID" value="NM_182929.4"/>
</dbReference>
<dbReference type="RefSeq" id="XP_006503164.1">
    <property type="nucleotide sequence ID" value="XM_006503101.1"/>
</dbReference>
<dbReference type="RefSeq" id="XP_006503165.1">
    <property type="nucleotide sequence ID" value="XM_006503102.1"/>
</dbReference>
<dbReference type="SMR" id="Q80U57"/>
<dbReference type="BioGRID" id="232439">
    <property type="interactions" value="7"/>
</dbReference>
<dbReference type="FunCoup" id="Q80U57">
    <property type="interactions" value="336"/>
</dbReference>
<dbReference type="STRING" id="10090.ENSMUSP00000068178"/>
<dbReference type="iPTMnet" id="Q80U57"/>
<dbReference type="PhosphoSitePlus" id="Q80U57"/>
<dbReference type="SwissPalm" id="Q80U57"/>
<dbReference type="PaxDb" id="10090-ENSMUSP00000068178"/>
<dbReference type="ProteomicsDB" id="253288"/>
<dbReference type="Antibodypedia" id="18011">
    <property type="antibodies" value="101 antibodies from 28 providers"/>
</dbReference>
<dbReference type="Ensembl" id="ENSMUST00000071093.9">
    <property type="protein sequence ID" value="ENSMUSP00000068178.3"/>
    <property type="gene ID" value="ENSMUSG00000032890.18"/>
</dbReference>
<dbReference type="Ensembl" id="ENSMUST00000106283.8">
    <property type="protein sequence ID" value="ENSMUSP00000101890.2"/>
    <property type="gene ID" value="ENSMUSG00000032890.18"/>
</dbReference>
<dbReference type="Ensembl" id="ENSMUST00000171363.2">
    <property type="protein sequence ID" value="ENSMUSP00000130295.2"/>
    <property type="gene ID" value="ENSMUSG00000032890.18"/>
</dbReference>
<dbReference type="GeneID" id="242662"/>
<dbReference type="KEGG" id="mmu:242662"/>
<dbReference type="UCSC" id="uc008unr.1">
    <property type="organism name" value="mouse"/>
</dbReference>
<dbReference type="AGR" id="MGI:2443331"/>
<dbReference type="CTD" id="9783"/>
<dbReference type="MGI" id="MGI:2443331">
    <property type="gene designation" value="Rims3"/>
</dbReference>
<dbReference type="VEuPathDB" id="HostDB:ENSMUSG00000032890"/>
<dbReference type="eggNOG" id="KOG2060">
    <property type="taxonomic scope" value="Eukaryota"/>
</dbReference>
<dbReference type="GeneTree" id="ENSGT00940000159332"/>
<dbReference type="HOGENOM" id="CLU_071205_0_0_1"/>
<dbReference type="InParanoid" id="Q80U57"/>
<dbReference type="OMA" id="GTMYSLE"/>
<dbReference type="OrthoDB" id="420032at2759"/>
<dbReference type="PhylomeDB" id="Q80U57"/>
<dbReference type="TreeFam" id="TF315600"/>
<dbReference type="BioGRID-ORCS" id="242662">
    <property type="hits" value="3 hits in 76 CRISPR screens"/>
</dbReference>
<dbReference type="ChiTaRS" id="Rims3">
    <property type="organism name" value="mouse"/>
</dbReference>
<dbReference type="PRO" id="PR:Q80U57"/>
<dbReference type="Proteomes" id="UP000000589">
    <property type="component" value="Chromosome 4"/>
</dbReference>
<dbReference type="RNAct" id="Q80U57">
    <property type="molecule type" value="protein"/>
</dbReference>
<dbReference type="Bgee" id="ENSMUSG00000032890">
    <property type="expression patterns" value="Expressed in medial dorsal nucleus of thalamus and 102 other cell types or tissues"/>
</dbReference>
<dbReference type="ExpressionAtlas" id="Q80U57">
    <property type="expression patterns" value="baseline and differential"/>
</dbReference>
<dbReference type="GO" id="GO:0016020">
    <property type="term" value="C:membrane"/>
    <property type="evidence" value="ECO:0007669"/>
    <property type="project" value="InterPro"/>
</dbReference>
<dbReference type="GO" id="GO:0045202">
    <property type="term" value="C:synapse"/>
    <property type="evidence" value="ECO:0007669"/>
    <property type="project" value="UniProtKB-SubCell"/>
</dbReference>
<dbReference type="GO" id="GO:0031267">
    <property type="term" value="F:small GTPase binding"/>
    <property type="evidence" value="ECO:0007669"/>
    <property type="project" value="InterPro"/>
</dbReference>
<dbReference type="GO" id="GO:0044325">
    <property type="term" value="F:transmembrane transporter binding"/>
    <property type="evidence" value="ECO:0000314"/>
    <property type="project" value="MGI"/>
</dbReference>
<dbReference type="GO" id="GO:0017156">
    <property type="term" value="P:calcium-ion regulated exocytosis"/>
    <property type="evidence" value="ECO:0000250"/>
    <property type="project" value="ParkinsonsUK-UCL"/>
</dbReference>
<dbReference type="GO" id="GO:0006836">
    <property type="term" value="P:neurotransmitter transport"/>
    <property type="evidence" value="ECO:0007669"/>
    <property type="project" value="UniProtKB-KW"/>
</dbReference>
<dbReference type="GO" id="GO:0042391">
    <property type="term" value="P:regulation of membrane potential"/>
    <property type="evidence" value="ECO:0000314"/>
    <property type="project" value="MGI"/>
</dbReference>
<dbReference type="GO" id="GO:2000300">
    <property type="term" value="P:regulation of synaptic vesicle exocytosis"/>
    <property type="evidence" value="ECO:0000266"/>
    <property type="project" value="MGI"/>
</dbReference>
<dbReference type="FunFam" id="2.60.40.150:FF:000001">
    <property type="entry name" value="Regulating synaptic membrane exocytosis 3, isoform CRA_a"/>
    <property type="match status" value="1"/>
</dbReference>
<dbReference type="Gene3D" id="2.60.40.150">
    <property type="entry name" value="C2 domain"/>
    <property type="match status" value="1"/>
</dbReference>
<dbReference type="InterPro" id="IPR000008">
    <property type="entry name" value="C2_dom"/>
</dbReference>
<dbReference type="InterPro" id="IPR035892">
    <property type="entry name" value="C2_domain_sf"/>
</dbReference>
<dbReference type="InterPro" id="IPR039032">
    <property type="entry name" value="Rim-like"/>
</dbReference>
<dbReference type="PANTHER" id="PTHR12157">
    <property type="entry name" value="REGULATING SYNAPTIC MEMBRANE EXOCYTOSIS PROTEIN"/>
    <property type="match status" value="1"/>
</dbReference>
<dbReference type="PANTHER" id="PTHR12157:SF25">
    <property type="entry name" value="REGULATING SYNAPTIC MEMBRANE EXOCYTOSIS PROTEIN 3"/>
    <property type="match status" value="1"/>
</dbReference>
<dbReference type="Pfam" id="PF00168">
    <property type="entry name" value="C2"/>
    <property type="match status" value="1"/>
</dbReference>
<dbReference type="SMART" id="SM00239">
    <property type="entry name" value="C2"/>
    <property type="match status" value="1"/>
</dbReference>
<dbReference type="SUPFAM" id="SSF49562">
    <property type="entry name" value="C2 domain (Calcium/lipid-binding domain, CaLB)"/>
    <property type="match status" value="1"/>
</dbReference>
<dbReference type="PROSITE" id="PS50004">
    <property type="entry name" value="C2"/>
    <property type="match status" value="1"/>
</dbReference>
<keyword id="KW-0268">Exocytosis</keyword>
<keyword id="KW-0532">Neurotransmitter transport</keyword>
<keyword id="KW-0597">Phosphoprotein</keyword>
<keyword id="KW-1185">Reference proteome</keyword>
<keyword id="KW-0770">Synapse</keyword>
<keyword id="KW-0813">Transport</keyword>
<proteinExistence type="evidence at protein level"/>
<gene>
    <name type="primary">Rims3</name>
    <name type="synonym">Kiaa0237</name>
</gene>
<comment type="function">
    <text evidence="1">Regulates synaptic membrane exocytosis.</text>
</comment>
<comment type="subunit">
    <text evidence="1">Binds PPFIA3 (By similarity). Does not bind RAB3.</text>
</comment>
<comment type="subcellular location">
    <subcellularLocation>
        <location evidence="1">Synapse</location>
    </subcellularLocation>
</comment>
<protein>
    <recommendedName>
        <fullName>Regulating synaptic membrane exocytosis protein 3</fullName>
        <shortName>Nim3</shortName>
    </recommendedName>
    <alternativeName>
        <fullName>RIM3 gamma</fullName>
    </alternativeName>
    <alternativeName>
        <fullName>Rab-3-interacting molecule 3</fullName>
        <shortName>RIM 3</shortName>
    </alternativeName>
</protein>